<accession>B2JIH6</accession>
<name>RL10_PARP8</name>
<gene>
    <name evidence="1" type="primary">rplJ</name>
    <name type="ordered locus">Bphy_2850</name>
</gene>
<organism>
    <name type="scientific">Paraburkholderia phymatum (strain DSM 17167 / CIP 108236 / LMG 21445 / STM815)</name>
    <name type="common">Burkholderia phymatum</name>
    <dbReference type="NCBI Taxonomy" id="391038"/>
    <lineage>
        <taxon>Bacteria</taxon>
        <taxon>Pseudomonadati</taxon>
        <taxon>Pseudomonadota</taxon>
        <taxon>Betaproteobacteria</taxon>
        <taxon>Burkholderiales</taxon>
        <taxon>Burkholderiaceae</taxon>
        <taxon>Paraburkholderia</taxon>
    </lineage>
</organism>
<feature type="chain" id="PRO_1000120932" description="Large ribosomal subunit protein uL10">
    <location>
        <begin position="1"/>
        <end position="165"/>
    </location>
</feature>
<protein>
    <recommendedName>
        <fullName evidence="1">Large ribosomal subunit protein uL10</fullName>
    </recommendedName>
    <alternativeName>
        <fullName evidence="2">50S ribosomal protein L10</fullName>
    </alternativeName>
</protein>
<proteinExistence type="inferred from homology"/>
<keyword id="KW-1185">Reference proteome</keyword>
<keyword id="KW-0687">Ribonucleoprotein</keyword>
<keyword id="KW-0689">Ribosomal protein</keyword>
<keyword id="KW-0694">RNA-binding</keyword>
<keyword id="KW-0699">rRNA-binding</keyword>
<evidence type="ECO:0000255" key="1">
    <source>
        <dbReference type="HAMAP-Rule" id="MF_00362"/>
    </source>
</evidence>
<evidence type="ECO:0000305" key="2"/>
<reference key="1">
    <citation type="journal article" date="2014" name="Stand. Genomic Sci.">
        <title>Complete genome sequence of Burkholderia phymatum STM815(T), a broad host range and efficient nitrogen-fixing symbiont of Mimosa species.</title>
        <authorList>
            <person name="Moulin L."/>
            <person name="Klonowska A."/>
            <person name="Caroline B."/>
            <person name="Booth K."/>
            <person name="Vriezen J.A."/>
            <person name="Melkonian R."/>
            <person name="James E.K."/>
            <person name="Young J.P."/>
            <person name="Bena G."/>
            <person name="Hauser L."/>
            <person name="Land M."/>
            <person name="Kyrpides N."/>
            <person name="Bruce D."/>
            <person name="Chain P."/>
            <person name="Copeland A."/>
            <person name="Pitluck S."/>
            <person name="Woyke T."/>
            <person name="Lizotte-Waniewski M."/>
            <person name="Bristow J."/>
            <person name="Riley M."/>
        </authorList>
    </citation>
    <scope>NUCLEOTIDE SEQUENCE [LARGE SCALE GENOMIC DNA]</scope>
    <source>
        <strain>DSM 17167 / CIP 108236 / LMG 21445 / STM815</strain>
    </source>
</reference>
<dbReference type="EMBL" id="CP001043">
    <property type="protein sequence ID" value="ACC72022.1"/>
    <property type="molecule type" value="Genomic_DNA"/>
</dbReference>
<dbReference type="RefSeq" id="WP_012402203.1">
    <property type="nucleotide sequence ID" value="NC_010622.1"/>
</dbReference>
<dbReference type="SMR" id="B2JIH6"/>
<dbReference type="STRING" id="391038.Bphy_2850"/>
<dbReference type="KEGG" id="bph:Bphy_2850"/>
<dbReference type="eggNOG" id="COG0244">
    <property type="taxonomic scope" value="Bacteria"/>
</dbReference>
<dbReference type="HOGENOM" id="CLU_092227_0_1_4"/>
<dbReference type="OrthoDB" id="9808307at2"/>
<dbReference type="Proteomes" id="UP000001192">
    <property type="component" value="Chromosome 1"/>
</dbReference>
<dbReference type="GO" id="GO:0015934">
    <property type="term" value="C:large ribosomal subunit"/>
    <property type="evidence" value="ECO:0007669"/>
    <property type="project" value="InterPro"/>
</dbReference>
<dbReference type="GO" id="GO:0070180">
    <property type="term" value="F:large ribosomal subunit rRNA binding"/>
    <property type="evidence" value="ECO:0007669"/>
    <property type="project" value="UniProtKB-UniRule"/>
</dbReference>
<dbReference type="GO" id="GO:0003735">
    <property type="term" value="F:structural constituent of ribosome"/>
    <property type="evidence" value="ECO:0007669"/>
    <property type="project" value="InterPro"/>
</dbReference>
<dbReference type="GO" id="GO:0006412">
    <property type="term" value="P:translation"/>
    <property type="evidence" value="ECO:0007669"/>
    <property type="project" value="UniProtKB-UniRule"/>
</dbReference>
<dbReference type="CDD" id="cd05797">
    <property type="entry name" value="Ribosomal_L10"/>
    <property type="match status" value="1"/>
</dbReference>
<dbReference type="Gene3D" id="3.30.70.1730">
    <property type="match status" value="1"/>
</dbReference>
<dbReference type="Gene3D" id="6.10.250.290">
    <property type="match status" value="1"/>
</dbReference>
<dbReference type="HAMAP" id="MF_00362">
    <property type="entry name" value="Ribosomal_uL10"/>
    <property type="match status" value="1"/>
</dbReference>
<dbReference type="InterPro" id="IPR001790">
    <property type="entry name" value="Ribosomal_uL10"/>
</dbReference>
<dbReference type="InterPro" id="IPR043141">
    <property type="entry name" value="Ribosomal_uL10-like_sf"/>
</dbReference>
<dbReference type="InterPro" id="IPR022973">
    <property type="entry name" value="Ribosomal_uL10_bac"/>
</dbReference>
<dbReference type="InterPro" id="IPR047865">
    <property type="entry name" value="Ribosomal_uL10_bac_type"/>
</dbReference>
<dbReference type="InterPro" id="IPR002363">
    <property type="entry name" value="Ribosomal_uL10_CS_bac"/>
</dbReference>
<dbReference type="NCBIfam" id="NF000955">
    <property type="entry name" value="PRK00099.1-1"/>
    <property type="match status" value="1"/>
</dbReference>
<dbReference type="PANTHER" id="PTHR11560">
    <property type="entry name" value="39S RIBOSOMAL PROTEIN L10, MITOCHONDRIAL"/>
    <property type="match status" value="1"/>
</dbReference>
<dbReference type="Pfam" id="PF00466">
    <property type="entry name" value="Ribosomal_L10"/>
    <property type="match status" value="1"/>
</dbReference>
<dbReference type="SUPFAM" id="SSF160369">
    <property type="entry name" value="Ribosomal protein L10-like"/>
    <property type="match status" value="1"/>
</dbReference>
<dbReference type="PROSITE" id="PS01109">
    <property type="entry name" value="RIBOSOMAL_L10"/>
    <property type="match status" value="1"/>
</dbReference>
<sequence length="165" mass="17641">MPLNKESKQAVVAEVSAQVAKAQTVVLAEYRGITVGDLTKLRAKAREQQVYLRVLKNTLARRAVEGTPFAPLAEQMTGPLIYGISEDAIAAAKVVNDFSKSNDKLIIKAGSYEGKVMDKAGVQALANIPSREELLSKLLFVMQAPVSGFARALAALAEKKQGEAA</sequence>
<comment type="function">
    <text evidence="1">Forms part of the ribosomal stalk, playing a central role in the interaction of the ribosome with GTP-bound translation factors.</text>
</comment>
<comment type="subunit">
    <text evidence="1">Part of the ribosomal stalk of the 50S ribosomal subunit. The N-terminus interacts with L11 and the large rRNA to form the base of the stalk. The C-terminus forms an elongated spine to which L12 dimers bind in a sequential fashion forming a multimeric L10(L12)X complex.</text>
</comment>
<comment type="similarity">
    <text evidence="1">Belongs to the universal ribosomal protein uL10 family.</text>
</comment>